<gene>
    <name evidence="1" type="primary">secA</name>
    <name type="ordered locus">PCC7424_0032</name>
</gene>
<organism>
    <name type="scientific">Gloeothece citriformis (strain PCC 7424)</name>
    <name type="common">Cyanothece sp. (strain PCC 7424)</name>
    <dbReference type="NCBI Taxonomy" id="65393"/>
    <lineage>
        <taxon>Bacteria</taxon>
        <taxon>Bacillati</taxon>
        <taxon>Cyanobacteriota</taxon>
        <taxon>Cyanophyceae</taxon>
        <taxon>Oscillatoriophycideae</taxon>
        <taxon>Chroococcales</taxon>
        <taxon>Aphanothecaceae</taxon>
        <taxon>Gloeothece</taxon>
        <taxon>Gloeothece citriformis</taxon>
    </lineage>
</organism>
<accession>B7K818</accession>
<evidence type="ECO:0000255" key="1">
    <source>
        <dbReference type="HAMAP-Rule" id="MF_01382"/>
    </source>
</evidence>
<dbReference type="EC" id="7.4.2.8" evidence="1"/>
<dbReference type="EMBL" id="CP001291">
    <property type="protein sequence ID" value="ACK68506.1"/>
    <property type="molecule type" value="Genomic_DNA"/>
</dbReference>
<dbReference type="RefSeq" id="WP_012597457.1">
    <property type="nucleotide sequence ID" value="NC_011729.1"/>
</dbReference>
<dbReference type="SMR" id="B7K818"/>
<dbReference type="STRING" id="65393.PCC7424_0032"/>
<dbReference type="KEGG" id="cyc:PCC7424_0032"/>
<dbReference type="eggNOG" id="COG0653">
    <property type="taxonomic scope" value="Bacteria"/>
</dbReference>
<dbReference type="HOGENOM" id="CLU_005314_3_0_3"/>
<dbReference type="OrthoDB" id="9805579at2"/>
<dbReference type="Proteomes" id="UP000002384">
    <property type="component" value="Chromosome"/>
</dbReference>
<dbReference type="GO" id="GO:0031522">
    <property type="term" value="C:cell envelope Sec protein transport complex"/>
    <property type="evidence" value="ECO:0007669"/>
    <property type="project" value="TreeGrafter"/>
</dbReference>
<dbReference type="GO" id="GO:0005829">
    <property type="term" value="C:cytosol"/>
    <property type="evidence" value="ECO:0007669"/>
    <property type="project" value="TreeGrafter"/>
</dbReference>
<dbReference type="GO" id="GO:0031676">
    <property type="term" value="C:plasma membrane-derived thylakoid membrane"/>
    <property type="evidence" value="ECO:0007669"/>
    <property type="project" value="UniProtKB-SubCell"/>
</dbReference>
<dbReference type="GO" id="GO:0005524">
    <property type="term" value="F:ATP binding"/>
    <property type="evidence" value="ECO:0007669"/>
    <property type="project" value="UniProtKB-UniRule"/>
</dbReference>
<dbReference type="GO" id="GO:0008564">
    <property type="term" value="F:protein-exporting ATPase activity"/>
    <property type="evidence" value="ECO:0007669"/>
    <property type="project" value="UniProtKB-EC"/>
</dbReference>
<dbReference type="GO" id="GO:0065002">
    <property type="term" value="P:intracellular protein transmembrane transport"/>
    <property type="evidence" value="ECO:0007669"/>
    <property type="project" value="UniProtKB-UniRule"/>
</dbReference>
<dbReference type="GO" id="GO:0017038">
    <property type="term" value="P:protein import"/>
    <property type="evidence" value="ECO:0007669"/>
    <property type="project" value="InterPro"/>
</dbReference>
<dbReference type="GO" id="GO:0006605">
    <property type="term" value="P:protein targeting"/>
    <property type="evidence" value="ECO:0007669"/>
    <property type="project" value="UniProtKB-UniRule"/>
</dbReference>
<dbReference type="GO" id="GO:0043952">
    <property type="term" value="P:protein transport by the Sec complex"/>
    <property type="evidence" value="ECO:0007669"/>
    <property type="project" value="TreeGrafter"/>
</dbReference>
<dbReference type="CDD" id="cd17928">
    <property type="entry name" value="DEXDc_SecA"/>
    <property type="match status" value="1"/>
</dbReference>
<dbReference type="CDD" id="cd18803">
    <property type="entry name" value="SF2_C_secA"/>
    <property type="match status" value="1"/>
</dbReference>
<dbReference type="FunFam" id="3.90.1440.10:FF:000003">
    <property type="entry name" value="Preprotein translocase SecA subunit"/>
    <property type="match status" value="1"/>
</dbReference>
<dbReference type="FunFam" id="3.40.50.300:FF:000429">
    <property type="entry name" value="Preprotein translocase subunit SecA"/>
    <property type="match status" value="1"/>
</dbReference>
<dbReference type="FunFam" id="1.10.3060.10:FF:000003">
    <property type="entry name" value="Protein translocase subunit SecA"/>
    <property type="match status" value="1"/>
</dbReference>
<dbReference type="FunFam" id="3.40.50.300:FF:000334">
    <property type="entry name" value="Protein translocase subunit SecA"/>
    <property type="match status" value="1"/>
</dbReference>
<dbReference type="Gene3D" id="1.10.3060.10">
    <property type="entry name" value="Helical scaffold and wing domains of SecA"/>
    <property type="match status" value="1"/>
</dbReference>
<dbReference type="Gene3D" id="3.40.50.300">
    <property type="entry name" value="P-loop containing nucleotide triphosphate hydrolases"/>
    <property type="match status" value="2"/>
</dbReference>
<dbReference type="Gene3D" id="3.90.1440.10">
    <property type="entry name" value="SecA, preprotein cross-linking domain"/>
    <property type="match status" value="1"/>
</dbReference>
<dbReference type="HAMAP" id="MF_01382">
    <property type="entry name" value="SecA"/>
    <property type="match status" value="1"/>
</dbReference>
<dbReference type="InterPro" id="IPR014001">
    <property type="entry name" value="Helicase_ATP-bd"/>
</dbReference>
<dbReference type="InterPro" id="IPR001650">
    <property type="entry name" value="Helicase_C-like"/>
</dbReference>
<dbReference type="InterPro" id="IPR027417">
    <property type="entry name" value="P-loop_NTPase"/>
</dbReference>
<dbReference type="InterPro" id="IPR000185">
    <property type="entry name" value="SecA"/>
</dbReference>
<dbReference type="InterPro" id="IPR020937">
    <property type="entry name" value="SecA_CS"/>
</dbReference>
<dbReference type="InterPro" id="IPR011115">
    <property type="entry name" value="SecA_DEAD"/>
</dbReference>
<dbReference type="InterPro" id="IPR014018">
    <property type="entry name" value="SecA_motor_DEAD"/>
</dbReference>
<dbReference type="InterPro" id="IPR011130">
    <property type="entry name" value="SecA_preprotein_X-link_dom"/>
</dbReference>
<dbReference type="InterPro" id="IPR044722">
    <property type="entry name" value="SecA_SF2_C"/>
</dbReference>
<dbReference type="InterPro" id="IPR011116">
    <property type="entry name" value="SecA_Wing/Scaffold"/>
</dbReference>
<dbReference type="InterPro" id="IPR036266">
    <property type="entry name" value="SecA_Wing/Scaffold_sf"/>
</dbReference>
<dbReference type="InterPro" id="IPR036670">
    <property type="entry name" value="SecA_X-link_sf"/>
</dbReference>
<dbReference type="NCBIfam" id="TIGR00963">
    <property type="entry name" value="secA"/>
    <property type="match status" value="1"/>
</dbReference>
<dbReference type="PANTHER" id="PTHR30612:SF0">
    <property type="entry name" value="CHLOROPLAST PROTEIN-TRANSPORTING ATPASE"/>
    <property type="match status" value="1"/>
</dbReference>
<dbReference type="PANTHER" id="PTHR30612">
    <property type="entry name" value="SECA INNER MEMBRANE COMPONENT OF SEC PROTEIN SECRETION SYSTEM"/>
    <property type="match status" value="1"/>
</dbReference>
<dbReference type="Pfam" id="PF21090">
    <property type="entry name" value="P-loop_SecA"/>
    <property type="match status" value="1"/>
</dbReference>
<dbReference type="Pfam" id="PF07517">
    <property type="entry name" value="SecA_DEAD"/>
    <property type="match status" value="1"/>
</dbReference>
<dbReference type="Pfam" id="PF01043">
    <property type="entry name" value="SecA_PP_bind"/>
    <property type="match status" value="1"/>
</dbReference>
<dbReference type="Pfam" id="PF07516">
    <property type="entry name" value="SecA_SW"/>
    <property type="match status" value="1"/>
</dbReference>
<dbReference type="PRINTS" id="PR00906">
    <property type="entry name" value="SECA"/>
</dbReference>
<dbReference type="SMART" id="SM00957">
    <property type="entry name" value="SecA_DEAD"/>
    <property type="match status" value="1"/>
</dbReference>
<dbReference type="SMART" id="SM00958">
    <property type="entry name" value="SecA_PP_bind"/>
    <property type="match status" value="1"/>
</dbReference>
<dbReference type="SUPFAM" id="SSF81886">
    <property type="entry name" value="Helical scaffold and wing domains of SecA"/>
    <property type="match status" value="1"/>
</dbReference>
<dbReference type="SUPFAM" id="SSF52540">
    <property type="entry name" value="P-loop containing nucleoside triphosphate hydrolases"/>
    <property type="match status" value="2"/>
</dbReference>
<dbReference type="SUPFAM" id="SSF81767">
    <property type="entry name" value="Pre-protein crosslinking domain of SecA"/>
    <property type="match status" value="1"/>
</dbReference>
<dbReference type="PROSITE" id="PS01312">
    <property type="entry name" value="SECA"/>
    <property type="match status" value="1"/>
</dbReference>
<dbReference type="PROSITE" id="PS51196">
    <property type="entry name" value="SECA_MOTOR_DEAD"/>
    <property type="match status" value="1"/>
</dbReference>
<protein>
    <recommendedName>
        <fullName evidence="1">Protein translocase subunit SecA</fullName>
        <ecNumber evidence="1">7.4.2.8</ecNumber>
    </recommendedName>
</protein>
<name>SECA_GLOC7</name>
<reference key="1">
    <citation type="journal article" date="2011" name="MBio">
        <title>Novel metabolic attributes of the genus Cyanothece, comprising a group of unicellular nitrogen-fixing Cyanobacteria.</title>
        <authorList>
            <person name="Bandyopadhyay A."/>
            <person name="Elvitigala T."/>
            <person name="Welsh E."/>
            <person name="Stockel J."/>
            <person name="Liberton M."/>
            <person name="Min H."/>
            <person name="Sherman L.A."/>
            <person name="Pakrasi H.B."/>
        </authorList>
    </citation>
    <scope>NUCLEOTIDE SEQUENCE [LARGE SCALE GENOMIC DNA]</scope>
    <source>
        <strain>PCC 7424</strain>
    </source>
</reference>
<keyword id="KW-0067">ATP-binding</keyword>
<keyword id="KW-0997">Cell inner membrane</keyword>
<keyword id="KW-1003">Cell membrane</keyword>
<keyword id="KW-0963">Cytoplasm</keyword>
<keyword id="KW-0472">Membrane</keyword>
<keyword id="KW-0547">Nucleotide-binding</keyword>
<keyword id="KW-0653">Protein transport</keyword>
<keyword id="KW-1185">Reference proteome</keyword>
<keyword id="KW-0793">Thylakoid</keyword>
<keyword id="KW-1278">Translocase</keyword>
<keyword id="KW-0811">Translocation</keyword>
<keyword id="KW-0813">Transport</keyword>
<sequence length="935" mass="106990">MLKALFGDPNTRKLNKFQSLVTETNLLEEEIKKLSDEELKRKTDEFREELEKASNDRELEEILDEILPEAFALVREASLRVLGMRHFDVQLMGGIVLHKGQIAEMKTGEGKTLVSTLPAYLNGLTGKGVHIVTVNDYLARRDAEWMGQVHRFLGLSVGLIQSGMSPEDRKKNYACDITYTTNSELGFDYLRDNMATSMAEVVQRPFNFCVIDEVDSILIDEARTPLIISGPIDRPTEKYIQASQIAKQLVKQEVEDGPGDYEVDEKARNILLTDEGYKKAEQLLGVKDLFDQDNPWAHYIFNAIKAKELFTKDVNYIVRGGEVVIVDEFTGRVLAGRRWSDGLHQAIEAKERVEIQQETQTLATITYQNFFLLYPKLSGMTGTAKTEETELEKVYNLQVTIIPTNRPSQRYDLPDAVYKAERGKWMAVAEEVEELHQKGRPILVGTTSVEKSELLSNLLRQKEIPHNLLNARPENVERESEIVAQAGRKGAVTIATNMAGRGTDIILGGNSDYMSRLKIREYLMPKLVKPEEDELAVNVPSLGGKRSRPQGFASDKKVKTWKASPDIFPTELSEETVKALKEAVKIAVDQHGQQSLGELEAEEKIAIASENAPTDDIVIQKLREVYKKIRAEYEIFTSKEHNEVVELGGLHVMGTERHESRRIDNQLRGRAGRQGDPGSTRFFLSLEDNLLKIFGGDRVARLMDALQVEEDMPIESGMLTRSLEGAQKKVETYYYDIRKQVFEYDEVMNNQRKAIYAERRRVLEGLDLKEQVLQYAEKTMDEIVEAYVNPDLPPEEWDLNTLVSKVKEFVYLLQDVAPSDIEDMTFMEMKNFLHEEVRKAYEVKEQEVDRVRPGLMRDAERFFILQQIDTLWREHLQGMESLRESIGLRGYGQKDPLIEYKQEGYEMFLEMMIDIRRNVVYSLFQFKPQGQPQAV</sequence>
<comment type="function">
    <text evidence="1">Part of the Sec protein translocase complex. Interacts with the SecYEG preprotein conducting channel. Has a central role in coupling the hydrolysis of ATP to the transfer of proteins into and across the cell membrane, serving as an ATP-driven molecular motor driving the stepwise translocation of polypeptide chains across the membrane.</text>
</comment>
<comment type="function">
    <text evidence="1">Probably participates in protein translocation into and across both the cytoplasmic and thylakoid membranes in cyanobacterial cells.</text>
</comment>
<comment type="catalytic activity">
    <reaction evidence="1">
        <text>ATP + H2O + cellular proteinSide 1 = ADP + phosphate + cellular proteinSide 2.</text>
        <dbReference type="EC" id="7.4.2.8"/>
    </reaction>
</comment>
<comment type="subunit">
    <text evidence="1">Monomer and homodimer. Part of the essential Sec protein translocation apparatus which comprises SecA, SecYEG and auxiliary proteins SecDF. Other proteins may also be involved.</text>
</comment>
<comment type="subcellular location">
    <subcellularLocation>
        <location evidence="1">Cell inner membrane</location>
        <topology evidence="1">Peripheral membrane protein</topology>
        <orientation evidence="1">Cytoplasmic side</orientation>
    </subcellularLocation>
    <subcellularLocation>
        <location evidence="1">Cellular thylakoid membrane</location>
        <topology evidence="1">Peripheral membrane protein</topology>
        <orientation evidence="1">Cytoplasmic side</orientation>
    </subcellularLocation>
    <subcellularLocation>
        <location evidence="1">Cytoplasm</location>
    </subcellularLocation>
</comment>
<comment type="similarity">
    <text evidence="1">Belongs to the SecA family.</text>
</comment>
<feature type="chain" id="PRO_1000144999" description="Protein translocase subunit SecA">
    <location>
        <begin position="1"/>
        <end position="935"/>
    </location>
</feature>
<feature type="binding site" evidence="1">
    <location>
        <position position="90"/>
    </location>
    <ligand>
        <name>ATP</name>
        <dbReference type="ChEBI" id="CHEBI:30616"/>
    </ligand>
</feature>
<feature type="binding site" evidence="1">
    <location>
        <begin position="108"/>
        <end position="112"/>
    </location>
    <ligand>
        <name>ATP</name>
        <dbReference type="ChEBI" id="CHEBI:30616"/>
    </ligand>
</feature>
<feature type="binding site" evidence="1">
    <location>
        <position position="504"/>
    </location>
    <ligand>
        <name>ATP</name>
        <dbReference type="ChEBI" id="CHEBI:30616"/>
    </ligand>
</feature>
<proteinExistence type="inferred from homology"/>